<keyword id="KW-0025">Alternative splicing</keyword>
<keyword id="KW-0963">Cytoplasm</keyword>
<keyword id="KW-0217">Developmental protein</keyword>
<keyword id="KW-0597">Phosphoprotein</keyword>
<keyword id="KW-1267">Proteomics identification</keyword>
<keyword id="KW-1185">Reference proteome</keyword>
<reference key="1">
    <citation type="submission" date="2001-08" db="EMBL/GenBank/DDBJ databases">
        <title>A high-resolution 5.0-Megabase transcript map of the CMT2D region on human chromosome 7.</title>
        <authorList>
            <person name="Ellsworth R.E."/>
            <person name="Lee Lin S.-Q."/>
            <person name="Green E.D."/>
        </authorList>
    </citation>
    <scope>NUCLEOTIDE SEQUENCE [MRNA] (ISOFORM 3)</scope>
</reference>
<reference key="2">
    <citation type="journal article" date="2004" name="Nat. Genet.">
        <title>Complete sequencing and characterization of 21,243 full-length human cDNAs.</title>
        <authorList>
            <person name="Ota T."/>
            <person name="Suzuki Y."/>
            <person name="Nishikawa T."/>
            <person name="Otsuki T."/>
            <person name="Sugiyama T."/>
            <person name="Irie R."/>
            <person name="Wakamatsu A."/>
            <person name="Hayashi K."/>
            <person name="Sato H."/>
            <person name="Nagai K."/>
            <person name="Kimura K."/>
            <person name="Makita H."/>
            <person name="Sekine M."/>
            <person name="Obayashi M."/>
            <person name="Nishi T."/>
            <person name="Shibahara T."/>
            <person name="Tanaka T."/>
            <person name="Ishii S."/>
            <person name="Yamamoto J."/>
            <person name="Saito K."/>
            <person name="Kawai Y."/>
            <person name="Isono Y."/>
            <person name="Nakamura Y."/>
            <person name="Nagahari K."/>
            <person name="Murakami K."/>
            <person name="Yasuda T."/>
            <person name="Iwayanagi T."/>
            <person name="Wagatsuma M."/>
            <person name="Shiratori A."/>
            <person name="Sudo H."/>
            <person name="Hosoiri T."/>
            <person name="Kaku Y."/>
            <person name="Kodaira H."/>
            <person name="Kondo H."/>
            <person name="Sugawara M."/>
            <person name="Takahashi M."/>
            <person name="Kanda K."/>
            <person name="Yokoi T."/>
            <person name="Furuya T."/>
            <person name="Kikkawa E."/>
            <person name="Omura Y."/>
            <person name="Abe K."/>
            <person name="Kamihara K."/>
            <person name="Katsuta N."/>
            <person name="Sato K."/>
            <person name="Tanikawa M."/>
            <person name="Yamazaki M."/>
            <person name="Ninomiya K."/>
            <person name="Ishibashi T."/>
            <person name="Yamashita H."/>
            <person name="Murakawa K."/>
            <person name="Fujimori K."/>
            <person name="Tanai H."/>
            <person name="Kimata M."/>
            <person name="Watanabe M."/>
            <person name="Hiraoka S."/>
            <person name="Chiba Y."/>
            <person name="Ishida S."/>
            <person name="Ono Y."/>
            <person name="Takiguchi S."/>
            <person name="Watanabe S."/>
            <person name="Yosida M."/>
            <person name="Hotuta T."/>
            <person name="Kusano J."/>
            <person name="Kanehori K."/>
            <person name="Takahashi-Fujii A."/>
            <person name="Hara H."/>
            <person name="Tanase T.-O."/>
            <person name="Nomura Y."/>
            <person name="Togiya S."/>
            <person name="Komai F."/>
            <person name="Hara R."/>
            <person name="Takeuchi K."/>
            <person name="Arita M."/>
            <person name="Imose N."/>
            <person name="Musashino K."/>
            <person name="Yuuki H."/>
            <person name="Oshima A."/>
            <person name="Sasaki N."/>
            <person name="Aotsuka S."/>
            <person name="Yoshikawa Y."/>
            <person name="Matsunawa H."/>
            <person name="Ichihara T."/>
            <person name="Shiohata N."/>
            <person name="Sano S."/>
            <person name="Moriya S."/>
            <person name="Momiyama H."/>
            <person name="Satoh N."/>
            <person name="Takami S."/>
            <person name="Terashima Y."/>
            <person name="Suzuki O."/>
            <person name="Nakagawa S."/>
            <person name="Senoh A."/>
            <person name="Mizoguchi H."/>
            <person name="Goto Y."/>
            <person name="Shimizu F."/>
            <person name="Wakebe H."/>
            <person name="Hishigaki H."/>
            <person name="Watanabe T."/>
            <person name="Sugiyama A."/>
            <person name="Takemoto M."/>
            <person name="Kawakami B."/>
            <person name="Yamazaki M."/>
            <person name="Watanabe K."/>
            <person name="Kumagai A."/>
            <person name="Itakura S."/>
            <person name="Fukuzumi Y."/>
            <person name="Fujimori Y."/>
            <person name="Komiyama M."/>
            <person name="Tashiro H."/>
            <person name="Tanigami A."/>
            <person name="Fujiwara T."/>
            <person name="Ono T."/>
            <person name="Yamada K."/>
            <person name="Fujii Y."/>
            <person name="Ozaki K."/>
            <person name="Hirao M."/>
            <person name="Ohmori Y."/>
            <person name="Kawabata A."/>
            <person name="Hikiji T."/>
            <person name="Kobatake N."/>
            <person name="Inagaki H."/>
            <person name="Ikema Y."/>
            <person name="Okamoto S."/>
            <person name="Okitani R."/>
            <person name="Kawakami T."/>
            <person name="Noguchi S."/>
            <person name="Itoh T."/>
            <person name="Shigeta K."/>
            <person name="Senba T."/>
            <person name="Matsumura K."/>
            <person name="Nakajima Y."/>
            <person name="Mizuno T."/>
            <person name="Morinaga M."/>
            <person name="Sasaki M."/>
            <person name="Togashi T."/>
            <person name="Oyama M."/>
            <person name="Hata H."/>
            <person name="Watanabe M."/>
            <person name="Komatsu T."/>
            <person name="Mizushima-Sugano J."/>
            <person name="Satoh T."/>
            <person name="Shirai Y."/>
            <person name="Takahashi Y."/>
            <person name="Nakagawa K."/>
            <person name="Okumura K."/>
            <person name="Nagase T."/>
            <person name="Nomura N."/>
            <person name="Kikuchi H."/>
            <person name="Masuho Y."/>
            <person name="Yamashita R."/>
            <person name="Nakai K."/>
            <person name="Yada T."/>
            <person name="Nakamura Y."/>
            <person name="Ohara O."/>
            <person name="Isogai T."/>
            <person name="Sugano S."/>
        </authorList>
    </citation>
    <scope>NUCLEOTIDE SEQUENCE [LARGE SCALE MRNA] (ISOFORMS 1 AND 2)</scope>
    <source>
        <tissue>Brain</tissue>
    </source>
</reference>
<reference key="3">
    <citation type="journal article" date="2007" name="BMC Genomics">
        <title>The full-ORF clone resource of the German cDNA consortium.</title>
        <authorList>
            <person name="Bechtel S."/>
            <person name="Rosenfelder H."/>
            <person name="Duda A."/>
            <person name="Schmidt C.P."/>
            <person name="Ernst U."/>
            <person name="Wellenreuther R."/>
            <person name="Mehrle A."/>
            <person name="Schuster C."/>
            <person name="Bahr A."/>
            <person name="Bloecker H."/>
            <person name="Heubner D."/>
            <person name="Hoerlein A."/>
            <person name="Michel G."/>
            <person name="Wedler H."/>
            <person name="Koehrer K."/>
            <person name="Ottenwaelder B."/>
            <person name="Poustka A."/>
            <person name="Wiemann S."/>
            <person name="Schupp I."/>
        </authorList>
    </citation>
    <scope>NUCLEOTIDE SEQUENCE [LARGE SCALE MRNA] (ISOFORM 1)</scope>
    <source>
        <tissue>Amygdala</tissue>
    </source>
</reference>
<reference key="4">
    <citation type="journal article" date="2003" name="Nature">
        <title>The DNA sequence of human chromosome 7.</title>
        <authorList>
            <person name="Hillier L.W."/>
            <person name="Fulton R.S."/>
            <person name="Fulton L.A."/>
            <person name="Graves T.A."/>
            <person name="Pepin K.H."/>
            <person name="Wagner-McPherson C."/>
            <person name="Layman D."/>
            <person name="Maas J."/>
            <person name="Jaeger S."/>
            <person name="Walker R."/>
            <person name="Wylie K."/>
            <person name="Sekhon M."/>
            <person name="Becker M.C."/>
            <person name="O'Laughlin M.D."/>
            <person name="Schaller M.E."/>
            <person name="Fewell G.A."/>
            <person name="Delehaunty K.D."/>
            <person name="Miner T.L."/>
            <person name="Nash W.E."/>
            <person name="Cordes M."/>
            <person name="Du H."/>
            <person name="Sun H."/>
            <person name="Edwards J."/>
            <person name="Bradshaw-Cordum H."/>
            <person name="Ali J."/>
            <person name="Andrews S."/>
            <person name="Isak A."/>
            <person name="Vanbrunt A."/>
            <person name="Nguyen C."/>
            <person name="Du F."/>
            <person name="Lamar B."/>
            <person name="Courtney L."/>
            <person name="Kalicki J."/>
            <person name="Ozersky P."/>
            <person name="Bielicki L."/>
            <person name="Scott K."/>
            <person name="Holmes A."/>
            <person name="Harkins R."/>
            <person name="Harris A."/>
            <person name="Strong C.M."/>
            <person name="Hou S."/>
            <person name="Tomlinson C."/>
            <person name="Dauphin-Kohlberg S."/>
            <person name="Kozlowicz-Reilly A."/>
            <person name="Leonard S."/>
            <person name="Rohlfing T."/>
            <person name="Rock S.M."/>
            <person name="Tin-Wollam A.-M."/>
            <person name="Abbott A."/>
            <person name="Minx P."/>
            <person name="Maupin R."/>
            <person name="Strowmatt C."/>
            <person name="Latreille P."/>
            <person name="Miller N."/>
            <person name="Johnson D."/>
            <person name="Murray J."/>
            <person name="Woessner J.P."/>
            <person name="Wendl M.C."/>
            <person name="Yang S.-P."/>
            <person name="Schultz B.R."/>
            <person name="Wallis J.W."/>
            <person name="Spieth J."/>
            <person name="Bieri T.A."/>
            <person name="Nelson J.O."/>
            <person name="Berkowicz N."/>
            <person name="Wohldmann P.E."/>
            <person name="Cook L.L."/>
            <person name="Hickenbotham M.T."/>
            <person name="Eldred J."/>
            <person name="Williams D."/>
            <person name="Bedell J.A."/>
            <person name="Mardis E.R."/>
            <person name="Clifton S.W."/>
            <person name="Chissoe S.L."/>
            <person name="Marra M.A."/>
            <person name="Raymond C."/>
            <person name="Haugen E."/>
            <person name="Gillett W."/>
            <person name="Zhou Y."/>
            <person name="James R."/>
            <person name="Phelps K."/>
            <person name="Iadanoto S."/>
            <person name="Bubb K."/>
            <person name="Simms E."/>
            <person name="Levy R."/>
            <person name="Clendenning J."/>
            <person name="Kaul R."/>
            <person name="Kent W.J."/>
            <person name="Furey T.S."/>
            <person name="Baertsch R.A."/>
            <person name="Brent M.R."/>
            <person name="Keibler E."/>
            <person name="Flicek P."/>
            <person name="Bork P."/>
            <person name="Suyama M."/>
            <person name="Bailey J.A."/>
            <person name="Portnoy M.E."/>
            <person name="Torrents D."/>
            <person name="Chinwalla A.T."/>
            <person name="Gish W.R."/>
            <person name="Eddy S.R."/>
            <person name="McPherson J.D."/>
            <person name="Olson M.V."/>
            <person name="Eichler E.E."/>
            <person name="Green E.D."/>
            <person name="Waterston R.H."/>
            <person name="Wilson R.K."/>
        </authorList>
    </citation>
    <scope>NUCLEOTIDE SEQUENCE [LARGE SCALE GENOMIC DNA]</scope>
</reference>
<reference key="5">
    <citation type="journal article" date="2014" name="Blood Cancer J.">
        <title>Novel function of the chromosome 7 open reading frame 41 gene to promote leukemic megakaryocyte differentiation by modulating TPA-induced signaling.</title>
        <authorList>
            <person name="Sun X."/>
            <person name="Lu B."/>
            <person name="Hu B."/>
            <person name="Xiao W."/>
            <person name="Li W."/>
            <person name="Huang Z."/>
        </authorList>
    </citation>
    <scope>FUNCTION</scope>
    <scope>INDUCTION</scope>
    <scope>SUBCELLULAR LOCATION</scope>
    <scope>PHOSPHORYLATION AT TYR-34</scope>
    <scope>MUTAGENESIS OF TYR-34</scope>
</reference>
<sequence length="131" mass="14925">MDFQQLADVAEKWCSNTPFELIATEETERRMDFYADPGVSFYVLCPDNGCGDNFHVWSESEDCLPFLQLAQDYISSCGKKTLHEVLEKVFKSFRPLLGLPDADDDAFEEYSADVEEEEPEADHPQMGVSQQ</sequence>
<gene>
    <name type="primary">MTURN</name>
    <name type="synonym">C7orf41</name>
</gene>
<proteinExistence type="evidence at protein level"/>
<protein>
    <recommendedName>
        <fullName>Maturin</fullName>
    </recommendedName>
    <alternativeName>
        <fullName>Maturin neural progenitor differentiation regulator protein homolog</fullName>
    </alternativeName>
    <alternativeName>
        <fullName>Protein Ells1</fullName>
    </alternativeName>
</protein>
<dbReference type="EMBL" id="AY054121">
    <property type="protein sequence ID" value="AAL14866.1"/>
    <property type="molecule type" value="mRNA"/>
</dbReference>
<dbReference type="EMBL" id="AK096533">
    <property type="protein sequence ID" value="BAC04811.1"/>
    <property type="molecule type" value="mRNA"/>
</dbReference>
<dbReference type="EMBL" id="AK098769">
    <property type="protein sequence ID" value="BAC05408.1"/>
    <property type="molecule type" value="mRNA"/>
</dbReference>
<dbReference type="EMBL" id="AL834391">
    <property type="protein sequence ID" value="CAD39053.2"/>
    <property type="molecule type" value="mRNA"/>
</dbReference>
<dbReference type="EMBL" id="AC007036">
    <property type="status" value="NOT_ANNOTATED_CDS"/>
    <property type="molecule type" value="Genomic_DNA"/>
</dbReference>
<dbReference type="CCDS" id="CCDS5425.2">
    <molecule id="Q8N3F0-1"/>
</dbReference>
<dbReference type="RefSeq" id="NP_690006.2">
    <molecule id="Q8N3F0-1"/>
    <property type="nucleotide sequence ID" value="NM_152793.3"/>
</dbReference>
<dbReference type="RefSeq" id="XP_005249709.1">
    <molecule id="Q8N3F0-1"/>
    <property type="nucleotide sequence ID" value="XM_005249652.4"/>
</dbReference>
<dbReference type="RefSeq" id="XP_054213542.1">
    <molecule id="Q8N3F0-1"/>
    <property type="nucleotide sequence ID" value="XM_054357567.1"/>
</dbReference>
<dbReference type="BioGRID" id="128785">
    <property type="interactions" value="35"/>
</dbReference>
<dbReference type="FunCoup" id="Q8N3F0">
    <property type="interactions" value="648"/>
</dbReference>
<dbReference type="IntAct" id="Q8N3F0">
    <property type="interactions" value="32"/>
</dbReference>
<dbReference type="STRING" id="9606.ENSP00000324204"/>
<dbReference type="GlyGen" id="Q8N3F0">
    <property type="glycosylation" value="1 site, 1 O-linked glycan (1 site)"/>
</dbReference>
<dbReference type="iPTMnet" id="Q8N3F0"/>
<dbReference type="PhosphoSitePlus" id="Q8N3F0"/>
<dbReference type="BioMuta" id="MTURN"/>
<dbReference type="DMDM" id="74714835"/>
<dbReference type="jPOST" id="Q8N3F0"/>
<dbReference type="MassIVE" id="Q8N3F0"/>
<dbReference type="PaxDb" id="9606-ENSP00000324204"/>
<dbReference type="PeptideAtlas" id="Q8N3F0"/>
<dbReference type="ProteomicsDB" id="71795">
    <molecule id="Q8N3F0-1"/>
</dbReference>
<dbReference type="ProteomicsDB" id="71796">
    <molecule id="Q8N3F0-2"/>
</dbReference>
<dbReference type="ProteomicsDB" id="71797">
    <molecule id="Q8N3F0-3"/>
</dbReference>
<dbReference type="ProteomicsDB" id="7456"/>
<dbReference type="Pumba" id="Q8N3F0"/>
<dbReference type="Antibodypedia" id="35235">
    <property type="antibodies" value="8 antibodies from 7 providers"/>
</dbReference>
<dbReference type="DNASU" id="222166"/>
<dbReference type="Ensembl" id="ENST00000324453.13">
    <molecule id="Q8N3F0-1"/>
    <property type="protein sequence ID" value="ENSP00000324204.8"/>
    <property type="gene ID" value="ENSG00000180354.17"/>
</dbReference>
<dbReference type="Ensembl" id="ENST00000324489.6">
    <molecule id="Q8N3F0-3"/>
    <property type="protein sequence ID" value="ENSP00000324755.5"/>
    <property type="gene ID" value="ENSG00000180354.17"/>
</dbReference>
<dbReference type="Ensembl" id="ENST00000409688.1">
    <molecule id="Q8N3F0-4"/>
    <property type="protein sequence ID" value="ENSP00000386490.1"/>
    <property type="gene ID" value="ENSG00000180354.17"/>
</dbReference>
<dbReference type="GeneID" id="222166"/>
<dbReference type="KEGG" id="hsa:222166"/>
<dbReference type="MANE-Select" id="ENST00000324453.13">
    <property type="protein sequence ID" value="ENSP00000324204.8"/>
    <property type="RefSeq nucleotide sequence ID" value="NM_152793.3"/>
    <property type="RefSeq protein sequence ID" value="NP_690006.2"/>
</dbReference>
<dbReference type="UCSC" id="uc003tar.2">
    <molecule id="Q8N3F0-1"/>
    <property type="organism name" value="human"/>
</dbReference>
<dbReference type="AGR" id="HGNC:25457"/>
<dbReference type="CTD" id="222166"/>
<dbReference type="DisGeNET" id="222166"/>
<dbReference type="GeneCards" id="MTURN"/>
<dbReference type="HGNC" id="HGNC:25457">
    <property type="gene designation" value="MTURN"/>
</dbReference>
<dbReference type="HPA" id="ENSG00000180354">
    <property type="expression patterns" value="Tissue enriched (brain)"/>
</dbReference>
<dbReference type="MIM" id="620491">
    <property type="type" value="gene"/>
</dbReference>
<dbReference type="neXtProt" id="NX_Q8N3F0"/>
<dbReference type="OpenTargets" id="ENSG00000180354"/>
<dbReference type="PharmGKB" id="PA147358571"/>
<dbReference type="VEuPathDB" id="HostDB:ENSG00000180354"/>
<dbReference type="eggNOG" id="ENOG502RXQA">
    <property type="taxonomic scope" value="Eukaryota"/>
</dbReference>
<dbReference type="GeneTree" id="ENSGT00500000045044"/>
<dbReference type="HOGENOM" id="CLU_163056_0_0_1"/>
<dbReference type="InParanoid" id="Q8N3F0"/>
<dbReference type="OMA" id="YEQYHAD"/>
<dbReference type="OrthoDB" id="9922400at2759"/>
<dbReference type="PAN-GO" id="Q8N3F0">
    <property type="GO annotations" value="3 GO annotations based on evolutionary models"/>
</dbReference>
<dbReference type="PhylomeDB" id="Q8N3F0"/>
<dbReference type="TreeFam" id="TF332814"/>
<dbReference type="PathwayCommons" id="Q8N3F0"/>
<dbReference type="SignaLink" id="Q8N3F0"/>
<dbReference type="SIGNOR" id="Q8N3F0"/>
<dbReference type="BioGRID-ORCS" id="222166">
    <property type="hits" value="13 hits in 1150 CRISPR screens"/>
</dbReference>
<dbReference type="ChiTaRS" id="MTURN">
    <property type="organism name" value="human"/>
</dbReference>
<dbReference type="GenomeRNAi" id="222166"/>
<dbReference type="Pharos" id="Q8N3F0">
    <property type="development level" value="Tdark"/>
</dbReference>
<dbReference type="PRO" id="PR:Q8N3F0"/>
<dbReference type="Proteomes" id="UP000005640">
    <property type="component" value="Chromosome 7"/>
</dbReference>
<dbReference type="RNAct" id="Q8N3F0">
    <property type="molecule type" value="protein"/>
</dbReference>
<dbReference type="Bgee" id="ENSG00000180354">
    <property type="expression patterns" value="Expressed in inferior vagus X ganglion and 182 other cell types or tissues"/>
</dbReference>
<dbReference type="ExpressionAtlas" id="Q8N3F0">
    <property type="expression patterns" value="baseline and differential"/>
</dbReference>
<dbReference type="GO" id="GO:0005737">
    <property type="term" value="C:cytoplasm"/>
    <property type="evidence" value="ECO:0000314"/>
    <property type="project" value="UniProtKB"/>
</dbReference>
<dbReference type="GO" id="GO:0032088">
    <property type="term" value="P:negative regulation of NF-kappaB transcription factor activity"/>
    <property type="evidence" value="ECO:0000315"/>
    <property type="project" value="UniProtKB"/>
</dbReference>
<dbReference type="GO" id="GO:0070374">
    <property type="term" value="P:positive regulation of ERK1 and ERK2 cascade"/>
    <property type="evidence" value="ECO:0000315"/>
    <property type="project" value="UniProtKB"/>
</dbReference>
<dbReference type="GO" id="GO:0046330">
    <property type="term" value="P:positive regulation of JNK cascade"/>
    <property type="evidence" value="ECO:0000315"/>
    <property type="project" value="UniProtKB"/>
</dbReference>
<dbReference type="GO" id="GO:0045654">
    <property type="term" value="P:positive regulation of megakaryocyte differentiation"/>
    <property type="evidence" value="ECO:0000315"/>
    <property type="project" value="UniProtKB"/>
</dbReference>
<dbReference type="GO" id="GO:0023051">
    <property type="term" value="P:regulation of signaling"/>
    <property type="evidence" value="ECO:0000318"/>
    <property type="project" value="GO_Central"/>
</dbReference>
<dbReference type="InterPro" id="IPR027892">
    <property type="entry name" value="Maturin"/>
</dbReference>
<dbReference type="PANTHER" id="PTHR32008">
    <property type="entry name" value="MATURIN"/>
    <property type="match status" value="1"/>
</dbReference>
<dbReference type="PANTHER" id="PTHR32008:SF2">
    <property type="entry name" value="MATURIN"/>
    <property type="match status" value="1"/>
</dbReference>
<dbReference type="Pfam" id="PF15167">
    <property type="entry name" value="DUF4581"/>
    <property type="match status" value="1"/>
</dbReference>
<organism>
    <name type="scientific">Homo sapiens</name>
    <name type="common">Human</name>
    <dbReference type="NCBI Taxonomy" id="9606"/>
    <lineage>
        <taxon>Eukaryota</taxon>
        <taxon>Metazoa</taxon>
        <taxon>Chordata</taxon>
        <taxon>Craniata</taxon>
        <taxon>Vertebrata</taxon>
        <taxon>Euteleostomi</taxon>
        <taxon>Mammalia</taxon>
        <taxon>Eutheria</taxon>
        <taxon>Euarchontoglires</taxon>
        <taxon>Primates</taxon>
        <taxon>Haplorrhini</taxon>
        <taxon>Catarrhini</taxon>
        <taxon>Hominidae</taxon>
        <taxon>Homo</taxon>
    </lineage>
</organism>
<evidence type="ECO:0000250" key="1">
    <source>
        <dbReference type="UniProtKB" id="Q7ZX36"/>
    </source>
</evidence>
<evidence type="ECO:0000256" key="2">
    <source>
        <dbReference type="SAM" id="MobiDB-lite"/>
    </source>
</evidence>
<evidence type="ECO:0000269" key="3">
    <source>
    </source>
</evidence>
<evidence type="ECO:0000303" key="4">
    <source>
    </source>
</evidence>
<evidence type="ECO:0000303" key="5">
    <source ref="1"/>
</evidence>
<evidence type="ECO:0000305" key="6"/>
<feature type="chain" id="PRO_0000294233" description="Maturin">
    <location>
        <begin position="1"/>
        <end position="131"/>
    </location>
</feature>
<feature type="region of interest" description="Disordered" evidence="2">
    <location>
        <begin position="107"/>
        <end position="131"/>
    </location>
</feature>
<feature type="compositionally biased region" description="Acidic residues" evidence="2">
    <location>
        <begin position="107"/>
        <end position="120"/>
    </location>
</feature>
<feature type="modified residue" description="Phosphotyrosine" evidence="3">
    <location>
        <position position="34"/>
    </location>
</feature>
<feature type="splice variant" id="VSP_026608" description="In isoform 3." evidence="5">
    <original>MDFQQLADVAEKWCSNTPFELIATEETERRMDFYADPGVSFYVLCPDNGCGDNF</original>
    <variation>MATHCPLYCVGADLMMNRAGE</variation>
    <location>
        <begin position="1"/>
        <end position="54"/>
    </location>
</feature>
<feature type="splice variant" id="VSP_053525" description="In isoform 4." evidence="6">
    <location>
        <begin position="55"/>
        <end position="95"/>
    </location>
</feature>
<feature type="splice variant" id="VSP_026609" description="In isoform 2." evidence="4">
    <original>PLLGLPDADDDAFEEYSADVEEEEPEADHPQMGVSQQ</original>
    <variation>GLISAVHALPVETWLFFVLWQTGALEVVYV</variation>
    <location>
        <begin position="95"/>
        <end position="131"/>
    </location>
</feature>
<feature type="mutagenesis site" description="Loss of ability to promote megakaryocyte differentiation, enhance ERK and JNK signaling and up-regulate the expression of FLI1." evidence="3">
    <original>Y</original>
    <variation>F</variation>
    <location>
        <position position="34"/>
    </location>
</feature>
<feature type="sequence conflict" description="In Ref. 2; BAC04811." evidence="6" ref="2">
    <original>L</original>
    <variation>P</variation>
    <location>
        <position position="82"/>
    </location>
</feature>
<accession>Q8N3F0</accession>
<accession>B8ZZW9</accession>
<accession>Q8N791</accession>
<accession>Q8N8M4</accession>
<accession>Q8NEX2</accession>
<name>MTURN_HUMAN</name>
<comment type="function">
    <text evidence="1 3">Promotes megakaryocyte differentiation by enhancing ERK and JNK signaling as well as up-regulating RUNX1 and FLI1 expression (PubMed:24681962). Represses NF-kappa-B transcriptional activity by inhibiting phosphorylation of RELA at 'Ser-536' (PubMed:24681962). May be involved in early neuronal development (By similarity).</text>
</comment>
<comment type="interaction">
    <interactant intactId="EBI-11980301">
        <id>Q8N3F0</id>
    </interactant>
    <interactant intactId="EBI-297683">
        <id>Q96CW1</id>
        <label>AP2M1</label>
    </interactant>
    <organismsDiffer>false</organismsDiffer>
    <experiments>3</experiments>
</comment>
<comment type="interaction">
    <interactant intactId="EBI-11980301">
        <id>Q8N3F0</id>
    </interactant>
    <interactant intactId="EBI-2339564">
        <id>Q8N5I2</id>
        <label>ARRDC1</label>
    </interactant>
    <organismsDiffer>false</organismsDiffer>
    <experiments>3</experiments>
</comment>
<comment type="interaction">
    <interactant intactId="EBI-11980301">
        <id>Q8N3F0</id>
    </interactant>
    <interactant intactId="EBI-724310">
        <id>Q15038</id>
        <label>DAZAP2</label>
    </interactant>
    <organismsDiffer>false</organismsDiffer>
    <experiments>5</experiments>
</comment>
<comment type="interaction">
    <interactant intactId="EBI-11980301">
        <id>Q8N3F0</id>
    </interactant>
    <interactant intactId="EBI-373524">
        <id>Q9UHC7</id>
        <label>MKRN1</label>
    </interactant>
    <organismsDiffer>false</organismsDiffer>
    <experiments>3</experiments>
</comment>
<comment type="interaction">
    <interactant intactId="EBI-11980301">
        <id>Q8N3F0</id>
    </interactant>
    <interactant intactId="EBI-373552">
        <id>Q96CS7</id>
        <label>PLEKHB2</label>
    </interactant>
    <organismsDiffer>false</organismsDiffer>
    <experiments>5</experiments>
</comment>
<comment type="interaction">
    <interactant intactId="EBI-11980301">
        <id>Q8N3F0</id>
    </interactant>
    <interactant intactId="EBI-10829018">
        <id>Q04864-2</id>
        <label>REL</label>
    </interactant>
    <organismsDiffer>false</organismsDiffer>
    <experiments>3</experiments>
</comment>
<comment type="interaction">
    <interactant intactId="EBI-11980301">
        <id>Q8N3F0</id>
    </interactant>
    <interactant intactId="EBI-723313">
        <id>Q9NWF9</id>
        <label>RNF216</label>
    </interactant>
    <organismsDiffer>false</organismsDiffer>
    <experiments>3</experiments>
</comment>
<comment type="interaction">
    <interactant intactId="EBI-11980301">
        <id>Q8N3F0</id>
    </interactant>
    <interactant intactId="EBI-2130266">
        <id>Q9H4P4</id>
        <label>RNF41</label>
    </interactant>
    <organismsDiffer>false</organismsDiffer>
    <experiments>3</experiments>
</comment>
<comment type="interaction">
    <interactant intactId="EBI-11980301">
        <id>Q8N3F0</id>
    </interactant>
    <interactant intactId="EBI-357375">
        <id>P62979</id>
        <label>RPS27A</label>
    </interactant>
    <organismsDiffer>false</organismsDiffer>
    <experiments>3</experiments>
</comment>
<comment type="interaction">
    <interactant intactId="EBI-11980301">
        <id>Q8N3F0</id>
    </interactant>
    <interactant intactId="EBI-10237585">
        <id>Q16384</id>
        <label>SSX1</label>
    </interactant>
    <organismsDiffer>false</organismsDiffer>
    <experiments>3</experiments>
</comment>
<comment type="interaction">
    <interactant intactId="EBI-11980301">
        <id>Q8N3F0</id>
    </interactant>
    <interactant intactId="EBI-2866213">
        <id>Q92537</id>
        <label>SUSD6</label>
    </interactant>
    <organismsDiffer>false</organismsDiffer>
    <experiments>3</experiments>
</comment>
<comment type="interaction">
    <interactant intactId="EBI-11980301">
        <id>Q8N3F0</id>
    </interactant>
    <interactant intactId="EBI-11528917">
        <id>Q8WW34-2</id>
        <label>TMEM239</label>
    </interactant>
    <organismsDiffer>false</organismsDiffer>
    <experiments>3</experiments>
</comment>
<comment type="interaction">
    <interactant intactId="EBI-11980301">
        <id>Q8N3F0</id>
    </interactant>
    <interactant intactId="EBI-12089038">
        <id>Q9NS68-2</id>
        <label>TNFRSF19</label>
    </interactant>
    <organismsDiffer>false</organismsDiffer>
    <experiments>3</experiments>
</comment>
<comment type="interaction">
    <interactant intactId="EBI-11980301">
        <id>Q8N3F0</id>
    </interactant>
    <interactant intactId="EBI-11952721">
        <id>Q05BL1</id>
        <label>TP53BP2</label>
    </interactant>
    <organismsDiffer>false</organismsDiffer>
    <experiments>3</experiments>
</comment>
<comment type="interaction">
    <interactant intactId="EBI-11980301">
        <id>Q8N3F0</id>
    </interactant>
    <interactant intactId="EBI-359276">
        <id>Q9Y4K3</id>
        <label>TRAF6</label>
    </interactant>
    <organismsDiffer>false</organismsDiffer>
    <experiments>3</experiments>
</comment>
<comment type="interaction">
    <interactant intactId="EBI-11980301">
        <id>Q8N3F0</id>
    </interactant>
    <interactant intactId="EBI-2130415">
        <id>O00635</id>
        <label>TRIM38</label>
    </interactant>
    <organismsDiffer>false</organismsDiffer>
    <experiments>3</experiments>
</comment>
<comment type="interaction">
    <interactant intactId="EBI-11980301">
        <id>Q8N3F0</id>
    </interactant>
    <interactant intactId="EBI-11523450">
        <id>Q9HCM9-2</id>
        <label>TRIM39</label>
    </interactant>
    <organismsDiffer>false</organismsDiffer>
    <experiments>3</experiments>
</comment>
<comment type="interaction">
    <interactant intactId="EBI-11980301">
        <id>Q8N3F0</id>
    </interactant>
    <interactant intactId="EBI-12840050">
        <id>Q9C035-3</id>
        <label>TRIM5</label>
    </interactant>
    <organismsDiffer>false</organismsDiffer>
    <experiments>3</experiments>
</comment>
<comment type="interaction">
    <interactant intactId="EBI-11980301">
        <id>Q8N3F0</id>
    </interactant>
    <interactant intactId="EBI-2340370">
        <id>Q9BZR9</id>
        <label>TRIM8</label>
    </interactant>
    <organismsDiffer>false</organismsDiffer>
    <experiments>7</experiments>
</comment>
<comment type="interaction">
    <interactant intactId="EBI-11980301">
        <id>Q8N3F0</id>
    </interactant>
    <interactant intactId="EBI-357304">
        <id>P62987</id>
        <label>UBA52</label>
    </interactant>
    <organismsDiffer>false</organismsDiffer>
    <experiments>3</experiments>
</comment>
<comment type="interaction">
    <interactant intactId="EBI-11980301">
        <id>Q8N3F0</id>
    </interactant>
    <interactant intactId="EBI-413034">
        <id>P0CG47</id>
        <label>UBB</label>
    </interactant>
    <organismsDiffer>false</organismsDiffer>
    <experiments>3</experiments>
</comment>
<comment type="interaction">
    <interactant intactId="EBI-11980301">
        <id>Q8N3F0</id>
    </interactant>
    <interactant intactId="EBI-3390054">
        <id>P0CG48</id>
        <label>UBC</label>
    </interactant>
    <organismsDiffer>false</organismsDiffer>
    <experiments>3</experiments>
</comment>
<comment type="subcellular location">
    <subcellularLocation>
        <location evidence="3">Cytoplasm</location>
    </subcellularLocation>
</comment>
<comment type="alternative products">
    <event type="alternative splicing"/>
    <isoform>
        <id>Q8N3F0-1</id>
        <name>1</name>
        <sequence type="displayed"/>
    </isoform>
    <isoform>
        <id>Q8N3F0-2</id>
        <name>2</name>
        <sequence type="described" ref="VSP_026609"/>
    </isoform>
    <isoform>
        <id>Q8N3F0-3</id>
        <name>3</name>
        <sequence type="described" ref="VSP_026608"/>
    </isoform>
    <isoform>
        <id>Q8N3F0-4</id>
        <name>4</name>
        <sequence type="described" ref="VSP_053525"/>
    </isoform>
</comment>
<comment type="induction">
    <text evidence="3">Up-regulated by NF-kappa-B RELA/p65 (PubMed:24681962). Up-regulated during 12-O-tetradecanoyl phorbol-acetate (TPA)-induced megakaryocytic differentiation of K562 and HEL cells (PubMed:24681962).</text>
</comment>
<comment type="PTM">
    <text evidence="3">Phosphorylation at Tyr-34 is essential for its ability to promote megakaryocyte differentiation.</text>
</comment>
<comment type="similarity">
    <text evidence="6">Belongs to the MTURN family.</text>
</comment>